<organism>
    <name type="scientific">Erwinia pyrifoliae</name>
    <dbReference type="NCBI Taxonomy" id="79967"/>
    <lineage>
        <taxon>Bacteria</taxon>
        <taxon>Pseudomonadati</taxon>
        <taxon>Pseudomonadota</taxon>
        <taxon>Gammaproteobacteria</taxon>
        <taxon>Enterobacterales</taxon>
        <taxon>Erwiniaceae</taxon>
        <taxon>Erwinia</taxon>
    </lineage>
</organism>
<reference key="1">
    <citation type="submission" date="2005-08" db="EMBL/GenBank/DDBJ databases">
        <title>Genetic organization of the hrp genes cluster and hrpNEp-based PCR method for detection of Erwinia pyrifoliae.</title>
        <authorList>
            <person name="Shrestha R."/>
            <person name="Kim J.E."/>
            <person name="Wilson C."/>
            <person name="Hur J.H."/>
            <person name="Lim C.K."/>
        </authorList>
    </citation>
    <scope>NUCLEOTIDE SEQUENCE [GENOMIC DNA]</scope>
    <source>
        <strain>WT3</strain>
    </source>
</reference>
<dbReference type="EMBL" id="DQ180962">
    <property type="protein sequence ID" value="ABA39805.1"/>
    <property type="molecule type" value="Genomic_DNA"/>
</dbReference>
<dbReference type="RefSeq" id="WP_012669309.1">
    <property type="nucleotide sequence ID" value="NZ_VOIC01000002.1"/>
</dbReference>
<dbReference type="OMA" id="SITDGQM"/>
<dbReference type="GO" id="GO:0005576">
    <property type="term" value="C:extracellular region"/>
    <property type="evidence" value="ECO:0007669"/>
    <property type="project" value="UniProtKB-SubCell"/>
</dbReference>
<dbReference type="GO" id="GO:0009289">
    <property type="term" value="C:pilus"/>
    <property type="evidence" value="ECO:0007669"/>
    <property type="project" value="UniProtKB-SubCell"/>
</dbReference>
<sequence length="67" mass="6855">MSGLLTSASSSASKTLESAMGQSLTESANAQASKMKMDTQNSILDGKMDSASKSLNSGHNAAKAIQF</sequence>
<keyword id="KW-0281">Fimbrium</keyword>
<keyword id="KW-0964">Secreted</keyword>
<keyword id="KW-0843">Virulence</keyword>
<protein>
    <recommendedName>
        <fullName>Hrp pili protein HrpA</fullName>
    </recommendedName>
    <alternativeName>
        <fullName>T3SS pilin HrpA</fullName>
    </alternativeName>
</protein>
<comment type="function">
    <text evidence="1">Major structure protein of the hrp pilus, which is a component of the type III secretion system (T3SS, Hrp secretion system) required for effector protein delivery, parasitism, and pathogenicity. The hrp pilus functions as a conduit for protein delivery into the host cell (By similarity).</text>
</comment>
<comment type="subcellular location">
    <subcellularLocation>
        <location evidence="1">Secreted</location>
    </subcellularLocation>
    <subcellularLocation>
        <location evidence="1">Fimbrium</location>
    </subcellularLocation>
    <text evidence="1">Extracellular and secreted via type III secretion system.</text>
</comment>
<comment type="similarity">
    <text evidence="3">Belongs to the HrpA type 2 family.</text>
</comment>
<evidence type="ECO:0000250" key="1"/>
<evidence type="ECO:0000256" key="2">
    <source>
        <dbReference type="SAM" id="MobiDB-lite"/>
    </source>
</evidence>
<evidence type="ECO:0000305" key="3"/>
<accession>Q3HY20</accession>
<feature type="chain" id="PRO_0000226254" description="Hrp pili protein HrpA">
    <location>
        <begin position="1"/>
        <end position="67"/>
    </location>
</feature>
<feature type="region of interest" description="Disordered" evidence="2">
    <location>
        <begin position="1"/>
        <end position="67"/>
    </location>
</feature>
<feature type="compositionally biased region" description="Low complexity" evidence="2">
    <location>
        <begin position="1"/>
        <end position="19"/>
    </location>
</feature>
<feature type="compositionally biased region" description="Polar residues" evidence="2">
    <location>
        <begin position="20"/>
        <end position="43"/>
    </location>
</feature>
<name>HRPA_ERWPY</name>
<proteinExistence type="inferred from homology"/>
<gene>
    <name type="primary">hrpA</name>
</gene>